<proteinExistence type="inferred from homology"/>
<protein>
    <recommendedName>
        <fullName>Putative binding protein HI_0213</fullName>
    </recommendedName>
</protein>
<comment type="function">
    <text evidence="1">Part of a binding-protein-dependent transport system.</text>
</comment>
<comment type="subcellular location">
    <subcellularLocation>
        <location evidence="3">Cell membrane</location>
        <topology evidence="3">Lipid-anchor</topology>
    </subcellularLocation>
</comment>
<comment type="similarity">
    <text evidence="3">Belongs to the bacterial solute-binding protein 5 family.</text>
</comment>
<keyword id="KW-1003">Cell membrane</keyword>
<keyword id="KW-0449">Lipoprotein</keyword>
<keyword id="KW-0472">Membrane</keyword>
<keyword id="KW-0564">Palmitate</keyword>
<keyword id="KW-1185">Reference proteome</keyword>
<keyword id="KW-0732">Signal</keyword>
<keyword id="KW-0813">Transport</keyword>
<feature type="signal peptide" evidence="2">
    <location>
        <begin position="1"/>
        <end position="23"/>
    </location>
</feature>
<feature type="chain" id="PRO_0000031808" description="Putative binding protein HI_0213">
    <location>
        <begin position="24"/>
        <end position="514"/>
    </location>
</feature>
<feature type="lipid moiety-binding region" description="N-palmitoyl cysteine" evidence="3">
    <location>
        <position position="24"/>
    </location>
</feature>
<feature type="lipid moiety-binding region" description="S-diacylglycerol cysteine" evidence="3">
    <location>
        <position position="24"/>
    </location>
</feature>
<dbReference type="EMBL" id="L42023">
    <property type="protein sequence ID" value="AAC21881.1"/>
    <property type="molecule type" value="Genomic_DNA"/>
</dbReference>
<dbReference type="PIR" id="B64055">
    <property type="entry name" value="B64055"/>
</dbReference>
<dbReference type="RefSeq" id="NP_438381.1">
    <property type="nucleotide sequence ID" value="NC_000907.1"/>
</dbReference>
<dbReference type="SMR" id="P44572"/>
<dbReference type="STRING" id="71421.HI_0213"/>
<dbReference type="EnsemblBacteria" id="AAC21881">
    <property type="protein sequence ID" value="AAC21881"/>
    <property type="gene ID" value="HI_0213"/>
</dbReference>
<dbReference type="KEGG" id="hin:HI_0213"/>
<dbReference type="PATRIC" id="fig|71421.8.peg.217"/>
<dbReference type="eggNOG" id="COG4166">
    <property type="taxonomic scope" value="Bacteria"/>
</dbReference>
<dbReference type="HOGENOM" id="CLU_017028_0_5_6"/>
<dbReference type="OrthoDB" id="9801912at2"/>
<dbReference type="PhylomeDB" id="P44572"/>
<dbReference type="BioCyc" id="HINF71421:G1GJ1-223-MONOMER"/>
<dbReference type="Proteomes" id="UP000000579">
    <property type="component" value="Chromosome"/>
</dbReference>
<dbReference type="GO" id="GO:0043190">
    <property type="term" value="C:ATP-binding cassette (ABC) transporter complex"/>
    <property type="evidence" value="ECO:0007669"/>
    <property type="project" value="InterPro"/>
</dbReference>
<dbReference type="GO" id="GO:0030288">
    <property type="term" value="C:outer membrane-bounded periplasmic space"/>
    <property type="evidence" value="ECO:0000318"/>
    <property type="project" value="GO_Central"/>
</dbReference>
<dbReference type="GO" id="GO:1904680">
    <property type="term" value="F:peptide transmembrane transporter activity"/>
    <property type="evidence" value="ECO:0000318"/>
    <property type="project" value="GO_Central"/>
</dbReference>
<dbReference type="GO" id="GO:0015833">
    <property type="term" value="P:peptide transport"/>
    <property type="evidence" value="ECO:0000318"/>
    <property type="project" value="GO_Central"/>
</dbReference>
<dbReference type="CDD" id="cd08504">
    <property type="entry name" value="PBP2_OppA"/>
    <property type="match status" value="1"/>
</dbReference>
<dbReference type="FunFam" id="3.90.76.10:FF:000001">
    <property type="entry name" value="Oligopeptide ABC transporter substrate-binding protein"/>
    <property type="match status" value="1"/>
</dbReference>
<dbReference type="Gene3D" id="3.90.76.10">
    <property type="entry name" value="Dipeptide-binding Protein, Domain 1"/>
    <property type="match status" value="1"/>
</dbReference>
<dbReference type="Gene3D" id="3.10.105.10">
    <property type="entry name" value="Dipeptide-binding Protein, Domain 3"/>
    <property type="match status" value="1"/>
</dbReference>
<dbReference type="Gene3D" id="3.40.190.10">
    <property type="entry name" value="Periplasmic binding protein-like II"/>
    <property type="match status" value="1"/>
</dbReference>
<dbReference type="InterPro" id="IPR030678">
    <property type="entry name" value="Peptide/Ni-bd"/>
</dbReference>
<dbReference type="InterPro" id="IPR039424">
    <property type="entry name" value="SBP_5"/>
</dbReference>
<dbReference type="InterPro" id="IPR023765">
    <property type="entry name" value="SBP_5_CS"/>
</dbReference>
<dbReference type="InterPro" id="IPR000914">
    <property type="entry name" value="SBP_5_dom"/>
</dbReference>
<dbReference type="PANTHER" id="PTHR30290">
    <property type="entry name" value="PERIPLASMIC BINDING COMPONENT OF ABC TRANSPORTER"/>
    <property type="match status" value="1"/>
</dbReference>
<dbReference type="PANTHER" id="PTHR30290:SF10">
    <property type="entry name" value="PERIPLASMIC OLIGOPEPTIDE-BINDING PROTEIN-RELATED"/>
    <property type="match status" value="1"/>
</dbReference>
<dbReference type="Pfam" id="PF00496">
    <property type="entry name" value="SBP_bac_5"/>
    <property type="match status" value="1"/>
</dbReference>
<dbReference type="PIRSF" id="PIRSF002741">
    <property type="entry name" value="MppA"/>
    <property type="match status" value="1"/>
</dbReference>
<dbReference type="SUPFAM" id="SSF53850">
    <property type="entry name" value="Periplasmic binding protein-like II"/>
    <property type="match status" value="1"/>
</dbReference>
<dbReference type="PROSITE" id="PS01040">
    <property type="entry name" value="SBP_BACTERIAL_5"/>
    <property type="match status" value="1"/>
</dbReference>
<name>Y213_HAEIN</name>
<sequence>MNNLFALCQRSAVIFSIIFTVVACDKLDSPKPISPQIETQKNTQLESNRVELKRGVYSDLTLQPWQAQSEEQTQLLRDLFEGLTAYDVQGNLVPAVAENWQTEDNKTWIFTLRENAKWSNGEPITASDFVQSWQTLSQSESPLKNYLAFMNLKNAKAVLEKALPVESLGLFAENDRTLRIELDKASPYLPSMLAHVSLLPHYAKSTEIFISNGAYQLQRQAENQHILTTNPYYWAKEKVIFQQVKYQKISVDADLSDFDVVMNPKKVNQNIQDYPQLCTYFYEFNLSDPVLQKSAVRKAIVSMISTNNLVADIAHLYPNNTFLPKSMLGEQESVWEPVVAEQLFSQNQISETRPLKLRIRYDDLSLNQTIAMRLNHQLSQSDLLRVENQGMSWQELQTARTKGDFQLIRSGWCADFNDPAAFLNLFYSKSPDNKNGYKNAEFDRLFESAMTTISEKVRLENYAKLKGIVQQEHLVLPIFQYSTPVYLVPSIMGAQVNSVGVIYSKDLWRKVQSQ</sequence>
<reference key="1">
    <citation type="journal article" date="1995" name="Science">
        <title>Whole-genome random sequencing and assembly of Haemophilus influenzae Rd.</title>
        <authorList>
            <person name="Fleischmann R.D."/>
            <person name="Adams M.D."/>
            <person name="White O."/>
            <person name="Clayton R.A."/>
            <person name="Kirkness E.F."/>
            <person name="Kerlavage A.R."/>
            <person name="Bult C.J."/>
            <person name="Tomb J.-F."/>
            <person name="Dougherty B.A."/>
            <person name="Merrick J.M."/>
            <person name="McKenney K."/>
            <person name="Sutton G.G."/>
            <person name="FitzHugh W."/>
            <person name="Fields C.A."/>
            <person name="Gocayne J.D."/>
            <person name="Scott J.D."/>
            <person name="Shirley R."/>
            <person name="Liu L.-I."/>
            <person name="Glodek A."/>
            <person name="Kelley J.M."/>
            <person name="Weidman J.F."/>
            <person name="Phillips C.A."/>
            <person name="Spriggs T."/>
            <person name="Hedblom E."/>
            <person name="Cotton M.D."/>
            <person name="Utterback T.R."/>
            <person name="Hanna M.C."/>
            <person name="Nguyen D.T."/>
            <person name="Saudek D.M."/>
            <person name="Brandon R.C."/>
            <person name="Fine L.D."/>
            <person name="Fritchman J.L."/>
            <person name="Fuhrmann J.L."/>
            <person name="Geoghagen N.S.M."/>
            <person name="Gnehm C.L."/>
            <person name="McDonald L.A."/>
            <person name="Small K.V."/>
            <person name="Fraser C.M."/>
            <person name="Smith H.O."/>
            <person name="Venter J.C."/>
        </authorList>
    </citation>
    <scope>NUCLEOTIDE SEQUENCE [LARGE SCALE GENOMIC DNA]</scope>
    <source>
        <strain>ATCC 51907 / DSM 11121 / KW20 / Rd</strain>
    </source>
</reference>
<gene>
    <name type="ordered locus">HI_0213</name>
</gene>
<evidence type="ECO:0000250" key="1"/>
<evidence type="ECO:0000255" key="2"/>
<evidence type="ECO:0000305" key="3"/>
<organism>
    <name type="scientific">Haemophilus influenzae (strain ATCC 51907 / DSM 11121 / KW20 / Rd)</name>
    <dbReference type="NCBI Taxonomy" id="71421"/>
    <lineage>
        <taxon>Bacteria</taxon>
        <taxon>Pseudomonadati</taxon>
        <taxon>Pseudomonadota</taxon>
        <taxon>Gammaproteobacteria</taxon>
        <taxon>Pasteurellales</taxon>
        <taxon>Pasteurellaceae</taxon>
        <taxon>Haemophilus</taxon>
    </lineage>
</organism>
<accession>P44572</accession>